<proteinExistence type="inferred from homology"/>
<keyword id="KW-0004">4Fe-4S</keyword>
<keyword id="KW-0963">Cytoplasm</keyword>
<keyword id="KW-1015">Disulfide bond</keyword>
<keyword id="KW-0408">Iron</keyword>
<keyword id="KW-0411">Iron-sulfur</keyword>
<keyword id="KW-0479">Metal-binding</keyword>
<keyword id="KW-0489">Methyltransferase</keyword>
<keyword id="KW-0698">rRNA processing</keyword>
<keyword id="KW-0949">S-adenosyl-L-methionine</keyword>
<keyword id="KW-0808">Transferase</keyword>
<keyword id="KW-0819">tRNA processing</keyword>
<organism>
    <name type="scientific">Aliivibrio salmonicida (strain LFI1238)</name>
    <name type="common">Vibrio salmonicida (strain LFI1238)</name>
    <dbReference type="NCBI Taxonomy" id="316275"/>
    <lineage>
        <taxon>Bacteria</taxon>
        <taxon>Pseudomonadati</taxon>
        <taxon>Pseudomonadota</taxon>
        <taxon>Gammaproteobacteria</taxon>
        <taxon>Vibrionales</taxon>
        <taxon>Vibrionaceae</taxon>
        <taxon>Aliivibrio</taxon>
    </lineage>
</organism>
<reference key="1">
    <citation type="journal article" date="2008" name="BMC Genomics">
        <title>The genome sequence of the fish pathogen Aliivibrio salmonicida strain LFI1238 shows extensive evidence of gene decay.</title>
        <authorList>
            <person name="Hjerde E."/>
            <person name="Lorentzen M.S."/>
            <person name="Holden M.T."/>
            <person name="Seeger K."/>
            <person name="Paulsen S."/>
            <person name="Bason N."/>
            <person name="Churcher C."/>
            <person name="Harris D."/>
            <person name="Norbertczak H."/>
            <person name="Quail M.A."/>
            <person name="Sanders S."/>
            <person name="Thurston S."/>
            <person name="Parkhill J."/>
            <person name="Willassen N.P."/>
            <person name="Thomson N.R."/>
        </authorList>
    </citation>
    <scope>NUCLEOTIDE SEQUENCE [LARGE SCALE GENOMIC DNA]</scope>
    <source>
        <strain>LFI1238</strain>
    </source>
</reference>
<gene>
    <name evidence="1" type="primary">rlmN</name>
    <name type="ordered locus">VSAL_I0726</name>
</gene>
<feature type="chain" id="PRO_1000188544" description="Dual-specificity RNA methyltransferase RlmN">
    <location>
        <begin position="1"/>
        <end position="383"/>
    </location>
</feature>
<feature type="domain" description="Radical SAM core" evidence="2">
    <location>
        <begin position="100"/>
        <end position="339"/>
    </location>
</feature>
<feature type="active site" description="Proton acceptor" evidence="1">
    <location>
        <position position="94"/>
    </location>
</feature>
<feature type="active site" description="S-methylcysteine intermediate" evidence="1">
    <location>
        <position position="344"/>
    </location>
</feature>
<feature type="binding site" evidence="1">
    <location>
        <position position="114"/>
    </location>
    <ligand>
        <name>[4Fe-4S] cluster</name>
        <dbReference type="ChEBI" id="CHEBI:49883"/>
        <note>4Fe-4S-S-AdoMet</note>
    </ligand>
</feature>
<feature type="binding site" evidence="1">
    <location>
        <position position="118"/>
    </location>
    <ligand>
        <name>[4Fe-4S] cluster</name>
        <dbReference type="ChEBI" id="CHEBI:49883"/>
        <note>4Fe-4S-S-AdoMet</note>
    </ligand>
</feature>
<feature type="binding site" evidence="1">
    <location>
        <position position="121"/>
    </location>
    <ligand>
        <name>[4Fe-4S] cluster</name>
        <dbReference type="ChEBI" id="CHEBI:49883"/>
        <note>4Fe-4S-S-AdoMet</note>
    </ligand>
</feature>
<feature type="binding site" evidence="1">
    <location>
        <begin position="168"/>
        <end position="169"/>
    </location>
    <ligand>
        <name>S-adenosyl-L-methionine</name>
        <dbReference type="ChEBI" id="CHEBI:59789"/>
    </ligand>
</feature>
<feature type="binding site" evidence="1">
    <location>
        <position position="200"/>
    </location>
    <ligand>
        <name>S-adenosyl-L-methionine</name>
        <dbReference type="ChEBI" id="CHEBI:59789"/>
    </ligand>
</feature>
<feature type="binding site" evidence="1">
    <location>
        <begin position="222"/>
        <end position="224"/>
    </location>
    <ligand>
        <name>S-adenosyl-L-methionine</name>
        <dbReference type="ChEBI" id="CHEBI:59789"/>
    </ligand>
</feature>
<feature type="binding site" evidence="1">
    <location>
        <position position="301"/>
    </location>
    <ligand>
        <name>S-adenosyl-L-methionine</name>
        <dbReference type="ChEBI" id="CHEBI:59789"/>
    </ligand>
</feature>
<feature type="disulfide bond" description="(transient)" evidence="1">
    <location>
        <begin position="107"/>
        <end position="344"/>
    </location>
</feature>
<dbReference type="EC" id="2.1.1.192" evidence="1"/>
<dbReference type="EMBL" id="FM178379">
    <property type="protein sequence ID" value="CAQ78411.1"/>
    <property type="molecule type" value="Genomic_DNA"/>
</dbReference>
<dbReference type="RefSeq" id="WP_012549531.1">
    <property type="nucleotide sequence ID" value="NC_011312.1"/>
</dbReference>
<dbReference type="SMR" id="B6EGY4"/>
<dbReference type="KEGG" id="vsa:VSAL_I0726"/>
<dbReference type="eggNOG" id="COG0820">
    <property type="taxonomic scope" value="Bacteria"/>
</dbReference>
<dbReference type="HOGENOM" id="CLU_029101_0_0_6"/>
<dbReference type="Proteomes" id="UP000001730">
    <property type="component" value="Chromosome 1"/>
</dbReference>
<dbReference type="GO" id="GO:0005737">
    <property type="term" value="C:cytoplasm"/>
    <property type="evidence" value="ECO:0007669"/>
    <property type="project" value="UniProtKB-SubCell"/>
</dbReference>
<dbReference type="GO" id="GO:0051539">
    <property type="term" value="F:4 iron, 4 sulfur cluster binding"/>
    <property type="evidence" value="ECO:0007669"/>
    <property type="project" value="UniProtKB-UniRule"/>
</dbReference>
<dbReference type="GO" id="GO:0046872">
    <property type="term" value="F:metal ion binding"/>
    <property type="evidence" value="ECO:0007669"/>
    <property type="project" value="UniProtKB-KW"/>
</dbReference>
<dbReference type="GO" id="GO:0070040">
    <property type="term" value="F:rRNA (adenine(2503)-C2-)-methyltransferase activity"/>
    <property type="evidence" value="ECO:0007669"/>
    <property type="project" value="UniProtKB-UniRule"/>
</dbReference>
<dbReference type="GO" id="GO:0019843">
    <property type="term" value="F:rRNA binding"/>
    <property type="evidence" value="ECO:0007669"/>
    <property type="project" value="UniProtKB-UniRule"/>
</dbReference>
<dbReference type="GO" id="GO:0002935">
    <property type="term" value="F:tRNA (adenine(37)-C2)-methyltransferase activity"/>
    <property type="evidence" value="ECO:0007669"/>
    <property type="project" value="UniProtKB-UniRule"/>
</dbReference>
<dbReference type="GO" id="GO:0000049">
    <property type="term" value="F:tRNA binding"/>
    <property type="evidence" value="ECO:0007669"/>
    <property type="project" value="UniProtKB-UniRule"/>
</dbReference>
<dbReference type="GO" id="GO:0070475">
    <property type="term" value="P:rRNA base methylation"/>
    <property type="evidence" value="ECO:0007669"/>
    <property type="project" value="UniProtKB-UniRule"/>
</dbReference>
<dbReference type="GO" id="GO:0030488">
    <property type="term" value="P:tRNA methylation"/>
    <property type="evidence" value="ECO:0007669"/>
    <property type="project" value="UniProtKB-UniRule"/>
</dbReference>
<dbReference type="CDD" id="cd01335">
    <property type="entry name" value="Radical_SAM"/>
    <property type="match status" value="1"/>
</dbReference>
<dbReference type="FunFam" id="1.10.150.530:FF:000003">
    <property type="entry name" value="Dual-specificity RNA methyltransferase RlmN"/>
    <property type="match status" value="1"/>
</dbReference>
<dbReference type="FunFam" id="3.20.20.70:FF:000008">
    <property type="entry name" value="Dual-specificity RNA methyltransferase RlmN"/>
    <property type="match status" value="1"/>
</dbReference>
<dbReference type="Gene3D" id="1.10.150.530">
    <property type="match status" value="1"/>
</dbReference>
<dbReference type="Gene3D" id="3.20.20.70">
    <property type="entry name" value="Aldolase class I"/>
    <property type="match status" value="1"/>
</dbReference>
<dbReference type="HAMAP" id="MF_01849">
    <property type="entry name" value="RNA_methyltr_RlmN"/>
    <property type="match status" value="1"/>
</dbReference>
<dbReference type="InterPro" id="IPR013785">
    <property type="entry name" value="Aldolase_TIM"/>
</dbReference>
<dbReference type="InterPro" id="IPR040072">
    <property type="entry name" value="Methyltransferase_A"/>
</dbReference>
<dbReference type="InterPro" id="IPR048641">
    <property type="entry name" value="RlmN_N"/>
</dbReference>
<dbReference type="InterPro" id="IPR027492">
    <property type="entry name" value="RNA_MTrfase_RlmN"/>
</dbReference>
<dbReference type="InterPro" id="IPR004383">
    <property type="entry name" value="rRNA_lsu_MTrfase_RlmN/Cfr"/>
</dbReference>
<dbReference type="InterPro" id="IPR007197">
    <property type="entry name" value="rSAM"/>
</dbReference>
<dbReference type="NCBIfam" id="NF008396">
    <property type="entry name" value="PRK11194.1"/>
    <property type="match status" value="1"/>
</dbReference>
<dbReference type="NCBIfam" id="TIGR00048">
    <property type="entry name" value="rRNA_mod_RlmN"/>
    <property type="match status" value="1"/>
</dbReference>
<dbReference type="PANTHER" id="PTHR30544">
    <property type="entry name" value="23S RRNA METHYLTRANSFERASE"/>
    <property type="match status" value="1"/>
</dbReference>
<dbReference type="PANTHER" id="PTHR30544:SF5">
    <property type="entry name" value="RADICAL SAM CORE DOMAIN-CONTAINING PROTEIN"/>
    <property type="match status" value="1"/>
</dbReference>
<dbReference type="Pfam" id="PF04055">
    <property type="entry name" value="Radical_SAM"/>
    <property type="match status" value="1"/>
</dbReference>
<dbReference type="Pfam" id="PF21016">
    <property type="entry name" value="RlmN_N"/>
    <property type="match status" value="1"/>
</dbReference>
<dbReference type="PIRSF" id="PIRSF006004">
    <property type="entry name" value="CHP00048"/>
    <property type="match status" value="1"/>
</dbReference>
<dbReference type="SFLD" id="SFLDF00275">
    <property type="entry name" value="adenosine_C2_methyltransferase"/>
    <property type="match status" value="1"/>
</dbReference>
<dbReference type="SFLD" id="SFLDS00029">
    <property type="entry name" value="Radical_SAM"/>
    <property type="match status" value="1"/>
</dbReference>
<dbReference type="SUPFAM" id="SSF102114">
    <property type="entry name" value="Radical SAM enzymes"/>
    <property type="match status" value="1"/>
</dbReference>
<dbReference type="PROSITE" id="PS51918">
    <property type="entry name" value="RADICAL_SAM"/>
    <property type="match status" value="1"/>
</dbReference>
<protein>
    <recommendedName>
        <fullName evidence="1">Dual-specificity RNA methyltransferase RlmN</fullName>
        <ecNumber evidence="1">2.1.1.192</ecNumber>
    </recommendedName>
    <alternativeName>
        <fullName evidence="1">23S rRNA (adenine(2503)-C(2))-methyltransferase</fullName>
    </alternativeName>
    <alternativeName>
        <fullName evidence="1">23S rRNA m2A2503 methyltransferase</fullName>
    </alternativeName>
    <alternativeName>
        <fullName evidence="1">Ribosomal RNA large subunit methyltransferase N</fullName>
    </alternativeName>
    <alternativeName>
        <fullName evidence="1">tRNA (adenine(37)-C(2))-methyltransferase</fullName>
    </alternativeName>
    <alternativeName>
        <fullName evidence="1">tRNA m2A37 methyltransferase</fullName>
    </alternativeName>
</protein>
<evidence type="ECO:0000255" key="1">
    <source>
        <dbReference type="HAMAP-Rule" id="MF_01849"/>
    </source>
</evidence>
<evidence type="ECO:0000255" key="2">
    <source>
        <dbReference type="PROSITE-ProRule" id="PRU01266"/>
    </source>
</evidence>
<name>RLMN_ALISL</name>
<comment type="function">
    <text evidence="1">Specifically methylates position 2 of adenine 2503 in 23S rRNA and position 2 of adenine 37 in tRNAs. m2A2503 modification seems to play a crucial role in the proofreading step occurring at the peptidyl transferase center and thus would serve to optimize ribosomal fidelity.</text>
</comment>
<comment type="catalytic activity">
    <reaction evidence="1">
        <text>adenosine(2503) in 23S rRNA + 2 reduced [2Fe-2S]-[ferredoxin] + 2 S-adenosyl-L-methionine = 2-methyladenosine(2503) in 23S rRNA + 5'-deoxyadenosine + L-methionine + 2 oxidized [2Fe-2S]-[ferredoxin] + S-adenosyl-L-homocysteine</text>
        <dbReference type="Rhea" id="RHEA:42916"/>
        <dbReference type="Rhea" id="RHEA-COMP:10000"/>
        <dbReference type="Rhea" id="RHEA-COMP:10001"/>
        <dbReference type="Rhea" id="RHEA-COMP:10152"/>
        <dbReference type="Rhea" id="RHEA-COMP:10282"/>
        <dbReference type="ChEBI" id="CHEBI:17319"/>
        <dbReference type="ChEBI" id="CHEBI:33737"/>
        <dbReference type="ChEBI" id="CHEBI:33738"/>
        <dbReference type="ChEBI" id="CHEBI:57844"/>
        <dbReference type="ChEBI" id="CHEBI:57856"/>
        <dbReference type="ChEBI" id="CHEBI:59789"/>
        <dbReference type="ChEBI" id="CHEBI:74411"/>
        <dbReference type="ChEBI" id="CHEBI:74497"/>
        <dbReference type="EC" id="2.1.1.192"/>
    </reaction>
</comment>
<comment type="catalytic activity">
    <reaction evidence="1">
        <text>adenosine(37) in tRNA + 2 reduced [2Fe-2S]-[ferredoxin] + 2 S-adenosyl-L-methionine = 2-methyladenosine(37) in tRNA + 5'-deoxyadenosine + L-methionine + 2 oxidized [2Fe-2S]-[ferredoxin] + S-adenosyl-L-homocysteine</text>
        <dbReference type="Rhea" id="RHEA:43332"/>
        <dbReference type="Rhea" id="RHEA-COMP:10000"/>
        <dbReference type="Rhea" id="RHEA-COMP:10001"/>
        <dbReference type="Rhea" id="RHEA-COMP:10162"/>
        <dbReference type="Rhea" id="RHEA-COMP:10485"/>
        <dbReference type="ChEBI" id="CHEBI:17319"/>
        <dbReference type="ChEBI" id="CHEBI:33737"/>
        <dbReference type="ChEBI" id="CHEBI:33738"/>
        <dbReference type="ChEBI" id="CHEBI:57844"/>
        <dbReference type="ChEBI" id="CHEBI:57856"/>
        <dbReference type="ChEBI" id="CHEBI:59789"/>
        <dbReference type="ChEBI" id="CHEBI:74411"/>
        <dbReference type="ChEBI" id="CHEBI:74497"/>
        <dbReference type="EC" id="2.1.1.192"/>
    </reaction>
</comment>
<comment type="cofactor">
    <cofactor evidence="1">
        <name>[4Fe-4S] cluster</name>
        <dbReference type="ChEBI" id="CHEBI:49883"/>
    </cofactor>
    <text evidence="1">Binds 1 [4Fe-4S] cluster. The cluster is coordinated with 3 cysteines and an exchangeable S-adenosyl-L-methionine.</text>
</comment>
<comment type="subcellular location">
    <subcellularLocation>
        <location evidence="1">Cytoplasm</location>
    </subcellularLocation>
</comment>
<comment type="miscellaneous">
    <text evidence="1">Reaction proceeds by a ping-pong mechanism involving intermediate methylation of a conserved cysteine residue.</text>
</comment>
<comment type="similarity">
    <text evidence="1">Belongs to the radical SAM superfamily. RlmN family.</text>
</comment>
<sequence>MTTTKTNLLDFDRKGLRAFFSEELGEKAFRADQIMKWMYHFGCDDFDQMNNINKKLREKLKQKCEIRAPYVSEAQHSVDGTIKWAMKVGDQDVETVYIPDGDRATLCVSSQVGCALACTFCSTAQQGFNRNLKVSEIVGQIWRAAREIGLEKETGRRPITNVVMMGMGEPLLNMKNLMPSLDIMLDDLGFGLSKRRVTVSTSGVVSGLEQMIGKVDVALAISLHAPTDKLRSEIMPINDRWNIEAFLACVREYIASSNANRGRVTVEYVLLDHINDDMDHARQLAELLKDTPAKINLIPFNPYPGSPYKKPSNSRIDRFMKTLMEYDFTVTVRRTRGDDIDAACGQLVGDVIDRTKRTQVKQQGEAIPVKLFNLDVLQQGKAE</sequence>
<accession>B6EGY4</accession>